<keyword id="KW-0413">Isomerase</keyword>
<gene>
    <name type="ordered locus">BMEI0257</name>
</gene>
<feature type="chain" id="PRO_0000354029" description="4-hydroxyproline epimerase">
    <location>
        <begin position="1"/>
        <end position="333"/>
    </location>
</feature>
<feature type="active site" description="Proton acceptor" evidence="2">
    <location>
        <position position="90"/>
    </location>
</feature>
<feature type="active site" description="Proton donor" evidence="2">
    <location>
        <position position="253"/>
    </location>
</feature>
<feature type="binding site" evidence="2">
    <location>
        <begin position="91"/>
        <end position="92"/>
    </location>
    <ligand>
        <name>substrate</name>
    </ligand>
</feature>
<feature type="binding site" evidence="2">
    <location>
        <position position="249"/>
    </location>
    <ligand>
        <name>substrate</name>
    </ligand>
</feature>
<feature type="binding site" evidence="2">
    <location>
        <begin position="254"/>
        <end position="255"/>
    </location>
    <ligand>
        <name>substrate</name>
    </ligand>
</feature>
<organism>
    <name type="scientific">Brucella melitensis biotype 1 (strain ATCC 23456 / CCUG 17765 / NCTC 10094 / 16M)</name>
    <dbReference type="NCBI Taxonomy" id="224914"/>
    <lineage>
        <taxon>Bacteria</taxon>
        <taxon>Pseudomonadati</taxon>
        <taxon>Pseudomonadota</taxon>
        <taxon>Alphaproteobacteria</taxon>
        <taxon>Hyphomicrobiales</taxon>
        <taxon>Brucellaceae</taxon>
        <taxon>Brucella/Ochrobactrum group</taxon>
        <taxon>Brucella</taxon>
    </lineage>
</organism>
<dbReference type="EC" id="5.1.1.8"/>
<dbReference type="EMBL" id="EF495342">
    <property type="protein sequence ID" value="ABS82394.1"/>
    <property type="molecule type" value="Genomic_DNA"/>
</dbReference>
<dbReference type="EMBL" id="AE008917">
    <property type="protein sequence ID" value="AAL51439.1"/>
    <property type="molecule type" value="Genomic_DNA"/>
</dbReference>
<dbReference type="PIR" id="AD3284">
    <property type="entry name" value="AD3284"/>
</dbReference>
<dbReference type="RefSeq" id="WP_004684253.1">
    <property type="nucleotide sequence ID" value="NZ_GG703781.1"/>
</dbReference>
<dbReference type="SMR" id="Q8YJ29"/>
<dbReference type="GeneID" id="29593014"/>
<dbReference type="KEGG" id="bme:BMEI0257"/>
<dbReference type="KEGG" id="bmel:DK63_1176"/>
<dbReference type="PATRIC" id="fig|224914.52.peg.1243"/>
<dbReference type="eggNOG" id="COG3938">
    <property type="taxonomic scope" value="Bacteria"/>
</dbReference>
<dbReference type="PhylomeDB" id="Q8YJ29"/>
<dbReference type="BRENDA" id="5.1.1.8">
    <property type="organism ID" value="995"/>
</dbReference>
<dbReference type="Proteomes" id="UP000000419">
    <property type="component" value="Chromosome I"/>
</dbReference>
<dbReference type="GO" id="GO:0047580">
    <property type="term" value="F:4-hydroxyproline epimerase activity"/>
    <property type="evidence" value="ECO:0007669"/>
    <property type="project" value="UniProtKB-EC"/>
</dbReference>
<dbReference type="FunFam" id="3.10.310.10:FF:000005">
    <property type="entry name" value="Proline racemase"/>
    <property type="match status" value="1"/>
</dbReference>
<dbReference type="Gene3D" id="3.10.310.10">
    <property type="entry name" value="Diaminopimelate Epimerase, Chain A, domain 1"/>
    <property type="match status" value="2"/>
</dbReference>
<dbReference type="InterPro" id="IPR008794">
    <property type="entry name" value="Pro_racemase_fam"/>
</dbReference>
<dbReference type="NCBIfam" id="NF010578">
    <property type="entry name" value="PRK13971.1"/>
    <property type="match status" value="1"/>
</dbReference>
<dbReference type="PANTHER" id="PTHR33442">
    <property type="entry name" value="TRANS-3-HYDROXY-L-PROLINE DEHYDRATASE"/>
    <property type="match status" value="1"/>
</dbReference>
<dbReference type="PANTHER" id="PTHR33442:SF1">
    <property type="entry name" value="TRANS-3-HYDROXY-L-PROLINE DEHYDRATASE"/>
    <property type="match status" value="1"/>
</dbReference>
<dbReference type="Pfam" id="PF05544">
    <property type="entry name" value="Pro_racemase"/>
    <property type="match status" value="1"/>
</dbReference>
<dbReference type="PIRSF" id="PIRSF029792">
    <property type="entry name" value="Pro_racemase"/>
    <property type="match status" value="1"/>
</dbReference>
<dbReference type="SFLD" id="SFLDS00028">
    <property type="entry name" value="Proline_Racemase"/>
    <property type="match status" value="1"/>
</dbReference>
<dbReference type="SUPFAM" id="SSF54506">
    <property type="entry name" value="Diaminopimelate epimerase-like"/>
    <property type="match status" value="1"/>
</dbReference>
<reference key="1">
    <citation type="journal article" date="2007" name="PLoS ONE">
        <title>Molecular and structural discrimination of proline racemase and hydroxyproline-2-epimerase from nosocomial and bacterial pathogens.</title>
        <authorList>
            <person name="Goytia M."/>
            <person name="Chamond N."/>
            <person name="Cosson A."/>
            <person name="Coatnoan N."/>
            <person name="Hermant D."/>
            <person name="Berneman A."/>
            <person name="Minoprio P."/>
        </authorList>
    </citation>
    <scope>NUCLEOTIDE SEQUENCE [GENOMIC DNA]</scope>
    <scope>CATALYTIC ACTIVITY</scope>
    <scope>ACTIVITY REGULATION</scope>
    <scope>BIOPHYSICOCHEMICAL PROPERTIES</scope>
    <source>
        <strain>ATCC 23456 / CCUG 17765 / NCTC 10094 / 16M</strain>
    </source>
</reference>
<reference key="2">
    <citation type="journal article" date="2002" name="Proc. Natl. Acad. Sci. U.S.A.">
        <title>The genome sequence of the facultative intracellular pathogen Brucella melitensis.</title>
        <authorList>
            <person name="DelVecchio V.G."/>
            <person name="Kapatral V."/>
            <person name="Redkar R.J."/>
            <person name="Patra G."/>
            <person name="Mujer C."/>
            <person name="Los T."/>
            <person name="Ivanova N."/>
            <person name="Anderson I."/>
            <person name="Bhattacharyya A."/>
            <person name="Lykidis A."/>
            <person name="Reznik G."/>
            <person name="Jablonski L."/>
            <person name="Larsen N."/>
            <person name="D'Souza M."/>
            <person name="Bernal A."/>
            <person name="Mazur M."/>
            <person name="Goltsman E."/>
            <person name="Selkov E."/>
            <person name="Elzer P.H."/>
            <person name="Hagius S."/>
            <person name="O'Callaghan D."/>
            <person name="Letesson J.-J."/>
            <person name="Haselkorn R."/>
            <person name="Kyrpides N.C."/>
            <person name="Overbeek R."/>
        </authorList>
    </citation>
    <scope>NUCLEOTIDE SEQUENCE [LARGE SCALE GENOMIC DNA]</scope>
    <source>
        <strain>ATCC 23456 / CCUG 17765 / NCTC 10094 / 16M</strain>
    </source>
</reference>
<accession>Q8YJ29</accession>
<sequence length="333" mass="36511">MARHSFFCVDGHTCGNPVRLVAGGGPNLNGSTMMEKCAHFLAEYDWIRTGLMFEPRGHDMMSGSILYPPTRPDCDVAVLFIETSGCLPMCGHGTIGTVTMAIEQGLVTPKTPGKLNLDTPAGLVAIEYEQDGQYVERVRLTNVPAFLYAEGLEVECPDLGPIKVDVAYGGNFYAIVEPQENYTDMDDYSALQLIAWSPVLRQRLNEKYKFQHPELPDINRLSHILWTGKPKHPQAHARNAVFYGDKAIDRSPCGTGTSARMAQLAAKGKLKPGDEFIHESIIGSLFHGRVERAAEVAGRPAIVPSIAGWARMTGYNTIFIDDRDPFAHGFSAA</sequence>
<protein>
    <recommendedName>
        <fullName>4-hydroxyproline epimerase</fullName>
        <ecNumber>5.1.1.8</ecNumber>
    </recommendedName>
    <alternativeName>
        <fullName>Hydroxyproline-2-epimerase</fullName>
        <shortName>BmHyPRE</shortName>
    </alternativeName>
</protein>
<comment type="function">
    <text>Allows intracellular utilization of 4-hydroxyproline, one of the major constituents of host collagen, by converting 4-hydroxy-L-proline to 4-hydroxy-D-proline, which can be further metabolized by intracellular 4-hydroxy-D-proline oxidases. Strong B-cell mitogen. Plays an important role in the regulation of intra- and extracellular amino acid pools, allowing the bacterium to profit from host precursors and enzymatic pathways.</text>
</comment>
<comment type="catalytic activity">
    <reaction evidence="3">
        <text>trans-4-hydroxy-L-proline = cis-4-hydroxy-D-proline</text>
        <dbReference type="Rhea" id="RHEA:21152"/>
        <dbReference type="ChEBI" id="CHEBI:57690"/>
        <dbReference type="ChEBI" id="CHEBI:58375"/>
        <dbReference type="EC" id="5.1.1.8"/>
    </reaction>
</comment>
<comment type="activity regulation">
    <text evidence="3">Inhibited by iodoacetate, iodoacetamide and by high amounts (10 mM) of pyrrole-2-carboxylic acid (PYC). Not inhibited by PYC at 1 mM.</text>
</comment>
<comment type="biophysicochemical properties">
    <kinetics>
        <KM evidence="3">9 mM for 4-hydroxy-L-proline</KM>
        <KM evidence="3">12.7 mM for 4-hydroxy-D-proline</KM>
        <Vmax evidence="3">0.45 uM/sec/mg enzyme with L-proline as substrate (at 37 degrees Celsius)</Vmax>
        <Vmax evidence="3">0.7 uM/sec/mg enzyme with D-proline as substrate (at 37 degrees Celsius)</Vmax>
    </kinetics>
</comment>
<comment type="subunit">
    <text evidence="1">Homodimer.</text>
</comment>
<comment type="miscellaneous">
    <text>This enzyme does not require pyridoxal phosphate (PLP) as a cofactor.</text>
</comment>
<comment type="similarity">
    <text evidence="4">Belongs to the proline racemase family.</text>
</comment>
<proteinExistence type="evidence at protein level"/>
<evidence type="ECO:0000250" key="1"/>
<evidence type="ECO:0000250" key="2">
    <source>
        <dbReference type="UniProtKB" id="Q4KGU2"/>
    </source>
</evidence>
<evidence type="ECO:0000269" key="3">
    <source>
    </source>
</evidence>
<evidence type="ECO:0000305" key="4"/>
<name>4HYPE_BRUME</name>